<evidence type="ECO:0000250" key="1"/>
<evidence type="ECO:0000305" key="2"/>
<proteinExistence type="evidence at transcript level"/>
<organism>
    <name type="scientific">Drosophila melanogaster</name>
    <name type="common">Fruit fly</name>
    <dbReference type="NCBI Taxonomy" id="7227"/>
    <lineage>
        <taxon>Eukaryota</taxon>
        <taxon>Metazoa</taxon>
        <taxon>Ecdysozoa</taxon>
        <taxon>Arthropoda</taxon>
        <taxon>Hexapoda</taxon>
        <taxon>Insecta</taxon>
        <taxon>Pterygota</taxon>
        <taxon>Neoptera</taxon>
        <taxon>Endopterygota</taxon>
        <taxon>Diptera</taxon>
        <taxon>Brachycera</taxon>
        <taxon>Muscomorpha</taxon>
        <taxon>Ephydroidea</taxon>
        <taxon>Drosophilidae</taxon>
        <taxon>Drosophila</taxon>
        <taxon>Sophophora</taxon>
    </lineage>
</organism>
<comment type="function">
    <text evidence="1">May be involved in the metabolism of insect hormones and in the breakdown of synthetic insecticides.</text>
</comment>
<comment type="cofactor">
    <cofactor evidence="1">
        <name>heme</name>
        <dbReference type="ChEBI" id="CHEBI:30413"/>
    </cofactor>
</comment>
<comment type="subcellular location">
    <subcellularLocation>
        <location evidence="2">Endoplasmic reticulum membrane</location>
        <topology evidence="2">Peripheral membrane protein</topology>
    </subcellularLocation>
    <subcellularLocation>
        <location evidence="2">Microsome membrane</location>
        <topology evidence="2">Peripheral membrane protein</topology>
    </subcellularLocation>
</comment>
<comment type="similarity">
    <text evidence="2">Belongs to the cytochrome P450 family.</text>
</comment>
<keyword id="KW-0256">Endoplasmic reticulum</keyword>
<keyword id="KW-0349">Heme</keyword>
<keyword id="KW-0408">Iron</keyword>
<keyword id="KW-0472">Membrane</keyword>
<keyword id="KW-0479">Metal-binding</keyword>
<keyword id="KW-0492">Microsome</keyword>
<keyword id="KW-0503">Monooxygenase</keyword>
<keyword id="KW-0560">Oxidoreductase</keyword>
<keyword id="KW-1185">Reference proteome</keyword>
<reference key="1">
    <citation type="submission" date="2002-08" db="EMBL/GenBank/DDBJ databases">
        <authorList>
            <person name="Willingham A.T."/>
        </authorList>
    </citation>
    <scope>NUCLEOTIDE SEQUENCE [MRNA]</scope>
</reference>
<reference key="2">
    <citation type="journal article" date="1999" name="Genetics">
        <title>An exploration of the sequence of a 2.9-Mb region of the genome of Drosophila melanogaster: the Adh region.</title>
        <authorList>
            <person name="Ashburner M."/>
            <person name="Misra S."/>
            <person name="Roote J."/>
            <person name="Lewis S.E."/>
            <person name="Blazej R.G."/>
            <person name="Davis T."/>
            <person name="Doyle C."/>
            <person name="Galle R.F."/>
            <person name="George R.A."/>
            <person name="Harris N.L."/>
            <person name="Hartzell G."/>
            <person name="Harvey D.A."/>
            <person name="Hong L."/>
            <person name="Houston K.A."/>
            <person name="Hoskins R.A."/>
            <person name="Johnson G."/>
            <person name="Martin C."/>
            <person name="Moshrefi A.R."/>
            <person name="Palazzolo M."/>
            <person name="Reese M.G."/>
            <person name="Spradling A.C."/>
            <person name="Tsang G."/>
            <person name="Wan K.H."/>
            <person name="Whitelaw K."/>
            <person name="Celniker S.E."/>
            <person name="Rubin G.M."/>
        </authorList>
    </citation>
    <scope>NUCLEOTIDE SEQUENCE [LARGE SCALE GENOMIC DNA]</scope>
    <source>
        <strain>Berkeley</strain>
    </source>
</reference>
<reference key="3">
    <citation type="journal article" date="2000" name="Science">
        <title>The genome sequence of Drosophila melanogaster.</title>
        <authorList>
            <person name="Adams M.D."/>
            <person name="Celniker S.E."/>
            <person name="Holt R.A."/>
            <person name="Evans C.A."/>
            <person name="Gocayne J.D."/>
            <person name="Amanatides P.G."/>
            <person name="Scherer S.E."/>
            <person name="Li P.W."/>
            <person name="Hoskins R.A."/>
            <person name="Galle R.F."/>
            <person name="George R.A."/>
            <person name="Lewis S.E."/>
            <person name="Richards S."/>
            <person name="Ashburner M."/>
            <person name="Henderson S.N."/>
            <person name="Sutton G.G."/>
            <person name="Wortman J.R."/>
            <person name="Yandell M.D."/>
            <person name="Zhang Q."/>
            <person name="Chen L.X."/>
            <person name="Brandon R.C."/>
            <person name="Rogers Y.-H.C."/>
            <person name="Blazej R.G."/>
            <person name="Champe M."/>
            <person name="Pfeiffer B.D."/>
            <person name="Wan K.H."/>
            <person name="Doyle C."/>
            <person name="Baxter E.G."/>
            <person name="Helt G."/>
            <person name="Nelson C.R."/>
            <person name="Miklos G.L.G."/>
            <person name="Abril J.F."/>
            <person name="Agbayani A."/>
            <person name="An H.-J."/>
            <person name="Andrews-Pfannkoch C."/>
            <person name="Baldwin D."/>
            <person name="Ballew R.M."/>
            <person name="Basu A."/>
            <person name="Baxendale J."/>
            <person name="Bayraktaroglu L."/>
            <person name="Beasley E.M."/>
            <person name="Beeson K.Y."/>
            <person name="Benos P.V."/>
            <person name="Berman B.P."/>
            <person name="Bhandari D."/>
            <person name="Bolshakov S."/>
            <person name="Borkova D."/>
            <person name="Botchan M.R."/>
            <person name="Bouck J."/>
            <person name="Brokstein P."/>
            <person name="Brottier P."/>
            <person name="Burtis K.C."/>
            <person name="Busam D.A."/>
            <person name="Butler H."/>
            <person name="Cadieu E."/>
            <person name="Center A."/>
            <person name="Chandra I."/>
            <person name="Cherry J.M."/>
            <person name="Cawley S."/>
            <person name="Dahlke C."/>
            <person name="Davenport L.B."/>
            <person name="Davies P."/>
            <person name="de Pablos B."/>
            <person name="Delcher A."/>
            <person name="Deng Z."/>
            <person name="Mays A.D."/>
            <person name="Dew I."/>
            <person name="Dietz S.M."/>
            <person name="Dodson K."/>
            <person name="Doup L.E."/>
            <person name="Downes M."/>
            <person name="Dugan-Rocha S."/>
            <person name="Dunkov B.C."/>
            <person name="Dunn P."/>
            <person name="Durbin K.J."/>
            <person name="Evangelista C.C."/>
            <person name="Ferraz C."/>
            <person name="Ferriera S."/>
            <person name="Fleischmann W."/>
            <person name="Fosler C."/>
            <person name="Gabrielian A.E."/>
            <person name="Garg N.S."/>
            <person name="Gelbart W.M."/>
            <person name="Glasser K."/>
            <person name="Glodek A."/>
            <person name="Gong F."/>
            <person name="Gorrell J.H."/>
            <person name="Gu Z."/>
            <person name="Guan P."/>
            <person name="Harris M."/>
            <person name="Harris N.L."/>
            <person name="Harvey D.A."/>
            <person name="Heiman T.J."/>
            <person name="Hernandez J.R."/>
            <person name="Houck J."/>
            <person name="Hostin D."/>
            <person name="Houston K.A."/>
            <person name="Howland T.J."/>
            <person name="Wei M.-H."/>
            <person name="Ibegwam C."/>
            <person name="Jalali M."/>
            <person name="Kalush F."/>
            <person name="Karpen G.H."/>
            <person name="Ke Z."/>
            <person name="Kennison J.A."/>
            <person name="Ketchum K.A."/>
            <person name="Kimmel B.E."/>
            <person name="Kodira C.D."/>
            <person name="Kraft C.L."/>
            <person name="Kravitz S."/>
            <person name="Kulp D."/>
            <person name="Lai Z."/>
            <person name="Lasko P."/>
            <person name="Lei Y."/>
            <person name="Levitsky A.A."/>
            <person name="Li J.H."/>
            <person name="Li Z."/>
            <person name="Liang Y."/>
            <person name="Lin X."/>
            <person name="Liu X."/>
            <person name="Mattei B."/>
            <person name="McIntosh T.C."/>
            <person name="McLeod M.P."/>
            <person name="McPherson D."/>
            <person name="Merkulov G."/>
            <person name="Milshina N.V."/>
            <person name="Mobarry C."/>
            <person name="Morris J."/>
            <person name="Moshrefi A."/>
            <person name="Mount S.M."/>
            <person name="Moy M."/>
            <person name="Murphy B."/>
            <person name="Murphy L."/>
            <person name="Muzny D.M."/>
            <person name="Nelson D.L."/>
            <person name="Nelson D.R."/>
            <person name="Nelson K.A."/>
            <person name="Nixon K."/>
            <person name="Nusskern D.R."/>
            <person name="Pacleb J.M."/>
            <person name="Palazzolo M."/>
            <person name="Pittman G.S."/>
            <person name="Pan S."/>
            <person name="Pollard J."/>
            <person name="Puri V."/>
            <person name="Reese M.G."/>
            <person name="Reinert K."/>
            <person name="Remington K."/>
            <person name="Saunders R.D.C."/>
            <person name="Scheeler F."/>
            <person name="Shen H."/>
            <person name="Shue B.C."/>
            <person name="Siden-Kiamos I."/>
            <person name="Simpson M."/>
            <person name="Skupski M.P."/>
            <person name="Smith T.J."/>
            <person name="Spier E."/>
            <person name="Spradling A.C."/>
            <person name="Stapleton M."/>
            <person name="Strong R."/>
            <person name="Sun E."/>
            <person name="Svirskas R."/>
            <person name="Tector C."/>
            <person name="Turner R."/>
            <person name="Venter E."/>
            <person name="Wang A.H."/>
            <person name="Wang X."/>
            <person name="Wang Z.-Y."/>
            <person name="Wassarman D.A."/>
            <person name="Weinstock G.M."/>
            <person name="Weissenbach J."/>
            <person name="Williams S.M."/>
            <person name="Woodage T."/>
            <person name="Worley K.C."/>
            <person name="Wu D."/>
            <person name="Yang S."/>
            <person name="Yao Q.A."/>
            <person name="Ye J."/>
            <person name="Yeh R.-F."/>
            <person name="Zaveri J.S."/>
            <person name="Zhan M."/>
            <person name="Zhang G."/>
            <person name="Zhao Q."/>
            <person name="Zheng L."/>
            <person name="Zheng X.H."/>
            <person name="Zhong F.N."/>
            <person name="Zhong W."/>
            <person name="Zhou X."/>
            <person name="Zhu S.C."/>
            <person name="Zhu X."/>
            <person name="Smith H.O."/>
            <person name="Gibbs R.A."/>
            <person name="Myers E.W."/>
            <person name="Rubin G.M."/>
            <person name="Venter J.C."/>
        </authorList>
    </citation>
    <scope>NUCLEOTIDE SEQUENCE [LARGE SCALE GENOMIC DNA]</scope>
    <source>
        <strain>Berkeley</strain>
    </source>
</reference>
<reference key="4">
    <citation type="journal article" date="2002" name="Genome Biol.">
        <title>Annotation of the Drosophila melanogaster euchromatic genome: a systematic review.</title>
        <authorList>
            <person name="Misra S."/>
            <person name="Crosby M.A."/>
            <person name="Mungall C.J."/>
            <person name="Matthews B.B."/>
            <person name="Campbell K.S."/>
            <person name="Hradecky P."/>
            <person name="Huang Y."/>
            <person name="Kaminker J.S."/>
            <person name="Millburn G.H."/>
            <person name="Prochnik S.E."/>
            <person name="Smith C.D."/>
            <person name="Tupy J.L."/>
            <person name="Whitfield E.J."/>
            <person name="Bayraktaroglu L."/>
            <person name="Berman B.P."/>
            <person name="Bettencourt B.R."/>
            <person name="Celniker S.E."/>
            <person name="de Grey A.D.N.J."/>
            <person name="Drysdale R.A."/>
            <person name="Harris N.L."/>
            <person name="Richter J."/>
            <person name="Russo S."/>
            <person name="Schroeder A.J."/>
            <person name="Shu S.Q."/>
            <person name="Stapleton M."/>
            <person name="Yamada C."/>
            <person name="Ashburner M."/>
            <person name="Gelbart W.M."/>
            <person name="Rubin G.M."/>
            <person name="Lewis S.E."/>
        </authorList>
    </citation>
    <scope>GENOME REANNOTATION</scope>
    <source>
        <strain>Berkeley</strain>
    </source>
</reference>
<accession>Q9V399</accession>
<name>CP303_DROME</name>
<gene>
    <name type="primary">Cyp303a1</name>
    <name type="synonym">l(2)35Fb</name>
    <name type="ORF">CG4163</name>
</gene>
<protein>
    <recommendedName>
        <fullName>Probable cytochrome P450 303a1</fullName>
        <ecNumber>1.14.-.-</ecNumber>
    </recommendedName>
    <alternativeName>
        <fullName>CYPCCCIIIA1</fullName>
    </alternativeName>
</protein>
<dbReference type="EC" id="1.14.-.-"/>
<dbReference type="EMBL" id="AY138853">
    <property type="protein sequence ID" value="AAN06321.1"/>
    <property type="molecule type" value="mRNA"/>
</dbReference>
<dbReference type="EMBL" id="AE014134">
    <property type="protein sequence ID" value="AAF53514.1"/>
    <property type="molecule type" value="Genomic_DNA"/>
</dbReference>
<dbReference type="RefSeq" id="NP_001285977.1">
    <property type="nucleotide sequence ID" value="NM_001299048.1"/>
</dbReference>
<dbReference type="RefSeq" id="NP_652070.1">
    <property type="nucleotide sequence ID" value="NM_143813.3"/>
</dbReference>
<dbReference type="SMR" id="Q9V399"/>
<dbReference type="BioGRID" id="72036">
    <property type="interactions" value="1"/>
</dbReference>
<dbReference type="DIP" id="DIP-23265N"/>
<dbReference type="FunCoup" id="Q9V399">
    <property type="interactions" value="1"/>
</dbReference>
<dbReference type="IntAct" id="Q9V399">
    <property type="interactions" value="3"/>
</dbReference>
<dbReference type="STRING" id="7227.FBpp0310367"/>
<dbReference type="PaxDb" id="7227-FBpp0080386"/>
<dbReference type="EnsemblMetazoa" id="FBtr0080828">
    <property type="protein sequence ID" value="FBpp0080386"/>
    <property type="gene ID" value="FBgn0001992"/>
</dbReference>
<dbReference type="EnsemblMetazoa" id="FBtr0343812">
    <property type="protein sequence ID" value="FBpp0310367"/>
    <property type="gene ID" value="FBgn0001992"/>
</dbReference>
<dbReference type="GeneID" id="49165"/>
<dbReference type="KEGG" id="dme:Dmel_CG4163"/>
<dbReference type="UCSC" id="CG4163-RA">
    <property type="organism name" value="d. melanogaster"/>
</dbReference>
<dbReference type="AGR" id="FB:FBgn0001992"/>
<dbReference type="CTD" id="49165"/>
<dbReference type="FlyBase" id="FBgn0001992">
    <property type="gene designation" value="Cyp303a1"/>
</dbReference>
<dbReference type="VEuPathDB" id="VectorBase:FBgn0001992"/>
<dbReference type="eggNOG" id="KOG0156">
    <property type="taxonomic scope" value="Eukaryota"/>
</dbReference>
<dbReference type="HOGENOM" id="CLU_001570_22_0_1"/>
<dbReference type="InParanoid" id="Q9V399"/>
<dbReference type="OMA" id="HRSLYSF"/>
<dbReference type="OrthoDB" id="1055148at2759"/>
<dbReference type="PhylomeDB" id="Q9V399"/>
<dbReference type="BioGRID-ORCS" id="49165">
    <property type="hits" value="0 hits in 3 CRISPR screens"/>
</dbReference>
<dbReference type="GenomeRNAi" id="49165"/>
<dbReference type="PRO" id="PR:Q9V399"/>
<dbReference type="Proteomes" id="UP000000803">
    <property type="component" value="Chromosome 2L"/>
</dbReference>
<dbReference type="Bgee" id="FBgn0001992">
    <property type="expression patterns" value="Expressed in cardial cell (Drosophila) in dorsal vessel heart and 8 other cell types or tissues"/>
</dbReference>
<dbReference type="ExpressionAtlas" id="Q9V399">
    <property type="expression patterns" value="baseline and differential"/>
</dbReference>
<dbReference type="GO" id="GO:0005789">
    <property type="term" value="C:endoplasmic reticulum membrane"/>
    <property type="evidence" value="ECO:0007669"/>
    <property type="project" value="UniProtKB-SubCell"/>
</dbReference>
<dbReference type="GO" id="GO:0020037">
    <property type="term" value="F:heme binding"/>
    <property type="evidence" value="ECO:0007669"/>
    <property type="project" value="InterPro"/>
</dbReference>
<dbReference type="GO" id="GO:0005506">
    <property type="term" value="F:iron ion binding"/>
    <property type="evidence" value="ECO:0007669"/>
    <property type="project" value="InterPro"/>
</dbReference>
<dbReference type="GO" id="GO:0004497">
    <property type="term" value="F:monooxygenase activity"/>
    <property type="evidence" value="ECO:0007669"/>
    <property type="project" value="UniProtKB-KW"/>
</dbReference>
<dbReference type="GO" id="GO:0016705">
    <property type="term" value="F:oxidoreductase activity, acting on paired donors, with incorporation or reduction of molecular oxygen"/>
    <property type="evidence" value="ECO:0007669"/>
    <property type="project" value="InterPro"/>
</dbReference>
<dbReference type="GO" id="GO:0007423">
    <property type="term" value="P:sensory organ development"/>
    <property type="evidence" value="ECO:0000315"/>
    <property type="project" value="FlyBase"/>
</dbReference>
<dbReference type="CDD" id="cd20651">
    <property type="entry name" value="CYP15A1-like"/>
    <property type="match status" value="1"/>
</dbReference>
<dbReference type="FunFam" id="1.10.630.10:FF:000144">
    <property type="entry name" value="probable cytochrome P450 303a1"/>
    <property type="match status" value="1"/>
</dbReference>
<dbReference type="Gene3D" id="1.10.630.10">
    <property type="entry name" value="Cytochrome P450"/>
    <property type="match status" value="1"/>
</dbReference>
<dbReference type="InterPro" id="IPR001128">
    <property type="entry name" value="Cyt_P450"/>
</dbReference>
<dbReference type="InterPro" id="IPR017972">
    <property type="entry name" value="Cyt_P450_CS"/>
</dbReference>
<dbReference type="InterPro" id="IPR002401">
    <property type="entry name" value="Cyt_P450_E_grp-I"/>
</dbReference>
<dbReference type="InterPro" id="IPR036396">
    <property type="entry name" value="Cyt_P450_sf"/>
</dbReference>
<dbReference type="InterPro" id="IPR050182">
    <property type="entry name" value="Cytochrome_P450_fam2"/>
</dbReference>
<dbReference type="PANTHER" id="PTHR24300:SF376">
    <property type="entry name" value="CYTOCHROME P450 15A1"/>
    <property type="match status" value="1"/>
</dbReference>
<dbReference type="PANTHER" id="PTHR24300">
    <property type="entry name" value="CYTOCHROME P450 508A4-RELATED"/>
    <property type="match status" value="1"/>
</dbReference>
<dbReference type="Pfam" id="PF00067">
    <property type="entry name" value="p450"/>
    <property type="match status" value="1"/>
</dbReference>
<dbReference type="PRINTS" id="PR00463">
    <property type="entry name" value="EP450I"/>
</dbReference>
<dbReference type="PRINTS" id="PR00385">
    <property type="entry name" value="P450"/>
</dbReference>
<dbReference type="SUPFAM" id="SSF48264">
    <property type="entry name" value="Cytochrome P450"/>
    <property type="match status" value="1"/>
</dbReference>
<dbReference type="PROSITE" id="PS00086">
    <property type="entry name" value="CYTOCHROME_P450"/>
    <property type="match status" value="1"/>
</dbReference>
<sequence>MFYTVIWIFCATLLAILFGGVRKPKRFPPGPAWYPIVGSALQVSQLRCRLGMFCKVIDVFARQYVNPYGFYGLKIGKDKVVIAYTNDAISEMMTNEDIDGRPDGIFYRLRTFNSRLGVLLTDGEMWVEQRRFILRHLKNFGFARSGMMDIVHNEATCLLQDLKDKVLKSGGKQTRIEMHDLTSVYVLNTLWCMLSGRRYEPGSPEITQLLETFFELFKNIDMVGALFSHFPLLRFIAPNFSGYNGFVESHRSLYTFMSKEIELHRLTYKNYDEPRDLMDSYLRAQDEGNDEKGMFSDQSLLAICLDMFLAGSETTNKSLGFCFMHLVLQPEIQERAFQEIKEVVGLERIPEWSRDRTKLPYCEAITLEAVRMFMLHTFGIPHRAVCDTRLSGYEIPKDTMVIACFRGMLINPVDFPDPESFNPDRYLFDGHLKLPEAFNPFGFGRHRCMGDLLGRQNLFMFTTTVLQNFKMVAIPGQVPEEVPLEGATAAVKPYDIMLVAREQ</sequence>
<feature type="chain" id="PRO_0000052312" description="Probable cytochrome P450 303a1">
    <location>
        <begin position="1"/>
        <end position="503"/>
    </location>
</feature>
<feature type="binding site" description="axial binding residue" evidence="1">
    <location>
        <position position="448"/>
    </location>
    <ligand>
        <name>heme</name>
        <dbReference type="ChEBI" id="CHEBI:30413"/>
    </ligand>
    <ligandPart>
        <name>Fe</name>
        <dbReference type="ChEBI" id="CHEBI:18248"/>
    </ligandPart>
</feature>